<accession>Q7TUW5</accession>
<name>TRMFO_PROMM</name>
<protein>
    <recommendedName>
        <fullName evidence="1">Methylenetetrahydrofolate--tRNA-(uracil-5-)-methyltransferase TrmFO</fullName>
        <ecNumber evidence="1">2.1.1.74</ecNumber>
    </recommendedName>
    <alternativeName>
        <fullName evidence="1">Folate-dependent tRNA (uracil-5-)-methyltransferase</fullName>
    </alternativeName>
    <alternativeName>
        <fullName evidence="1">Folate-dependent tRNA(M-5-U54)-methyltransferase</fullName>
    </alternativeName>
</protein>
<sequence>MSSFPTVLVIGAGLAGSEAAWQIAQAGVPVRLIEMRPIKHSPAHYSSECAELVCSNSFGALSSDRAAGLLKEELRRLGSIVIRTADSHAVPAGGALAVNRASFSASLTKELSAHPHITIERQEQEHLPDEGQITVLATGPLTSELLAENLRTFTGRSECHFFDAASPIIEGESIDLTLAFRASRYDKGDADYMNCPMDKGQYLAFREALLNAEQAELKEFDKESAKFFEGCLPIEELARRGEDTMRYGPLKPIGLWDPRWGDLNDRDVRRSKRAYAVVQLRKEDLEGRLWNLVGFQTNLKWSEQKRVLKMIPGLHQAEFVRFGVMHRNTFSKPRSYLNQPCSSANDPTSSLLDRSPAQRDIPLQ</sequence>
<comment type="function">
    <text evidence="1">Catalyzes the folate-dependent formation of 5-methyl-uridine at position 54 (M-5-U54) in all tRNAs.</text>
</comment>
<comment type="catalytic activity">
    <reaction evidence="1">
        <text>uridine(54) in tRNA + (6R)-5,10-methylene-5,6,7,8-tetrahydrofolate + NADH + H(+) = 5-methyluridine(54) in tRNA + (6S)-5,6,7,8-tetrahydrofolate + NAD(+)</text>
        <dbReference type="Rhea" id="RHEA:16873"/>
        <dbReference type="Rhea" id="RHEA-COMP:10167"/>
        <dbReference type="Rhea" id="RHEA-COMP:10193"/>
        <dbReference type="ChEBI" id="CHEBI:15378"/>
        <dbReference type="ChEBI" id="CHEBI:15636"/>
        <dbReference type="ChEBI" id="CHEBI:57453"/>
        <dbReference type="ChEBI" id="CHEBI:57540"/>
        <dbReference type="ChEBI" id="CHEBI:57945"/>
        <dbReference type="ChEBI" id="CHEBI:65315"/>
        <dbReference type="ChEBI" id="CHEBI:74447"/>
        <dbReference type="EC" id="2.1.1.74"/>
    </reaction>
</comment>
<comment type="catalytic activity">
    <reaction evidence="1">
        <text>uridine(54) in tRNA + (6R)-5,10-methylene-5,6,7,8-tetrahydrofolate + NADPH + H(+) = 5-methyluridine(54) in tRNA + (6S)-5,6,7,8-tetrahydrofolate + NADP(+)</text>
        <dbReference type="Rhea" id="RHEA:62372"/>
        <dbReference type="Rhea" id="RHEA-COMP:10167"/>
        <dbReference type="Rhea" id="RHEA-COMP:10193"/>
        <dbReference type="ChEBI" id="CHEBI:15378"/>
        <dbReference type="ChEBI" id="CHEBI:15636"/>
        <dbReference type="ChEBI" id="CHEBI:57453"/>
        <dbReference type="ChEBI" id="CHEBI:57783"/>
        <dbReference type="ChEBI" id="CHEBI:58349"/>
        <dbReference type="ChEBI" id="CHEBI:65315"/>
        <dbReference type="ChEBI" id="CHEBI:74447"/>
        <dbReference type="EC" id="2.1.1.74"/>
    </reaction>
</comment>
<comment type="cofactor">
    <cofactor evidence="1">
        <name>FAD</name>
        <dbReference type="ChEBI" id="CHEBI:57692"/>
    </cofactor>
</comment>
<comment type="subcellular location">
    <subcellularLocation>
        <location evidence="1">Cytoplasm</location>
    </subcellularLocation>
</comment>
<comment type="similarity">
    <text evidence="1">Belongs to the MnmG family. TrmFO subfamily.</text>
</comment>
<keyword id="KW-0963">Cytoplasm</keyword>
<keyword id="KW-0274">FAD</keyword>
<keyword id="KW-0285">Flavoprotein</keyword>
<keyword id="KW-0489">Methyltransferase</keyword>
<keyword id="KW-0520">NAD</keyword>
<keyword id="KW-0521">NADP</keyword>
<keyword id="KW-1185">Reference proteome</keyword>
<keyword id="KW-0808">Transferase</keyword>
<keyword id="KW-0819">tRNA processing</keyword>
<proteinExistence type="inferred from homology"/>
<gene>
    <name evidence="1" type="primary">trmFO</name>
    <name type="ordered locus">PMT_1049</name>
</gene>
<organism>
    <name type="scientific">Prochlorococcus marinus (strain MIT 9313)</name>
    <dbReference type="NCBI Taxonomy" id="74547"/>
    <lineage>
        <taxon>Bacteria</taxon>
        <taxon>Bacillati</taxon>
        <taxon>Cyanobacteriota</taxon>
        <taxon>Cyanophyceae</taxon>
        <taxon>Synechococcales</taxon>
        <taxon>Prochlorococcaceae</taxon>
        <taxon>Prochlorococcus</taxon>
    </lineage>
</organism>
<evidence type="ECO:0000255" key="1">
    <source>
        <dbReference type="HAMAP-Rule" id="MF_01037"/>
    </source>
</evidence>
<evidence type="ECO:0000256" key="2">
    <source>
        <dbReference type="SAM" id="MobiDB-lite"/>
    </source>
</evidence>
<feature type="chain" id="PRO_0000346380" description="Methylenetetrahydrofolate--tRNA-(uracil-5-)-methyltransferase TrmFO">
    <location>
        <begin position="1"/>
        <end position="364"/>
    </location>
</feature>
<feature type="region of interest" description="Disordered" evidence="2">
    <location>
        <begin position="335"/>
        <end position="364"/>
    </location>
</feature>
<feature type="compositionally biased region" description="Polar residues" evidence="2">
    <location>
        <begin position="335"/>
        <end position="352"/>
    </location>
</feature>
<feature type="binding site" evidence="1">
    <location>
        <begin position="11"/>
        <end position="16"/>
    </location>
    <ligand>
        <name>FAD</name>
        <dbReference type="ChEBI" id="CHEBI:57692"/>
    </ligand>
</feature>
<reference key="1">
    <citation type="journal article" date="2003" name="Nature">
        <title>Genome divergence in two Prochlorococcus ecotypes reflects oceanic niche differentiation.</title>
        <authorList>
            <person name="Rocap G."/>
            <person name="Larimer F.W."/>
            <person name="Lamerdin J.E."/>
            <person name="Malfatti S."/>
            <person name="Chain P."/>
            <person name="Ahlgren N.A."/>
            <person name="Arellano A."/>
            <person name="Coleman M."/>
            <person name="Hauser L."/>
            <person name="Hess W.R."/>
            <person name="Johnson Z.I."/>
            <person name="Land M.L."/>
            <person name="Lindell D."/>
            <person name="Post A.F."/>
            <person name="Regala W."/>
            <person name="Shah M."/>
            <person name="Shaw S.L."/>
            <person name="Steglich C."/>
            <person name="Sullivan M.B."/>
            <person name="Ting C.S."/>
            <person name="Tolonen A."/>
            <person name="Webb E.A."/>
            <person name="Zinser E.R."/>
            <person name="Chisholm S.W."/>
        </authorList>
    </citation>
    <scope>NUCLEOTIDE SEQUENCE [LARGE SCALE GENOMIC DNA]</scope>
    <source>
        <strain>MIT 9313</strain>
    </source>
</reference>
<dbReference type="EC" id="2.1.1.74" evidence="1"/>
<dbReference type="EMBL" id="BX548175">
    <property type="protein sequence ID" value="CAE21224.1"/>
    <property type="molecule type" value="Genomic_DNA"/>
</dbReference>
<dbReference type="SMR" id="Q7TUW5"/>
<dbReference type="KEGG" id="pmt:PMT_1049"/>
<dbReference type="eggNOG" id="COG1206">
    <property type="taxonomic scope" value="Bacteria"/>
</dbReference>
<dbReference type="HOGENOM" id="CLU_033057_0_0_3"/>
<dbReference type="Proteomes" id="UP000001423">
    <property type="component" value="Chromosome"/>
</dbReference>
<dbReference type="GO" id="GO:0005829">
    <property type="term" value="C:cytosol"/>
    <property type="evidence" value="ECO:0007669"/>
    <property type="project" value="TreeGrafter"/>
</dbReference>
<dbReference type="GO" id="GO:0050660">
    <property type="term" value="F:flavin adenine dinucleotide binding"/>
    <property type="evidence" value="ECO:0007669"/>
    <property type="project" value="UniProtKB-UniRule"/>
</dbReference>
<dbReference type="GO" id="GO:0047151">
    <property type="term" value="F:tRNA (uracil(54)-C5)-methyltransferase activity, 5,10-methylenetetrahydrofolate-dependent"/>
    <property type="evidence" value="ECO:0007669"/>
    <property type="project" value="UniProtKB-UniRule"/>
</dbReference>
<dbReference type="GO" id="GO:0030488">
    <property type="term" value="P:tRNA methylation"/>
    <property type="evidence" value="ECO:0007669"/>
    <property type="project" value="TreeGrafter"/>
</dbReference>
<dbReference type="GO" id="GO:0002098">
    <property type="term" value="P:tRNA wobble uridine modification"/>
    <property type="evidence" value="ECO:0007669"/>
    <property type="project" value="TreeGrafter"/>
</dbReference>
<dbReference type="Gene3D" id="3.50.50.60">
    <property type="entry name" value="FAD/NAD(P)-binding domain"/>
    <property type="match status" value="1"/>
</dbReference>
<dbReference type="HAMAP" id="MF_01037">
    <property type="entry name" value="TrmFO"/>
    <property type="match status" value="1"/>
</dbReference>
<dbReference type="InterPro" id="IPR036188">
    <property type="entry name" value="FAD/NAD-bd_sf"/>
</dbReference>
<dbReference type="InterPro" id="IPR002218">
    <property type="entry name" value="MnmG-rel"/>
</dbReference>
<dbReference type="InterPro" id="IPR040131">
    <property type="entry name" value="MnmG_N"/>
</dbReference>
<dbReference type="InterPro" id="IPR004417">
    <property type="entry name" value="TrmFO"/>
</dbReference>
<dbReference type="NCBIfam" id="TIGR00137">
    <property type="entry name" value="gid_trmFO"/>
    <property type="match status" value="1"/>
</dbReference>
<dbReference type="NCBIfam" id="NF003739">
    <property type="entry name" value="PRK05335.1"/>
    <property type="match status" value="1"/>
</dbReference>
<dbReference type="PANTHER" id="PTHR11806">
    <property type="entry name" value="GLUCOSE INHIBITED DIVISION PROTEIN A"/>
    <property type="match status" value="1"/>
</dbReference>
<dbReference type="PANTHER" id="PTHR11806:SF2">
    <property type="entry name" value="METHYLENETETRAHYDROFOLATE--TRNA-(URACIL-5-)-METHYLTRANSFERASE TRMFO"/>
    <property type="match status" value="1"/>
</dbReference>
<dbReference type="Pfam" id="PF01134">
    <property type="entry name" value="GIDA"/>
    <property type="match status" value="1"/>
</dbReference>
<dbReference type="SUPFAM" id="SSF51905">
    <property type="entry name" value="FAD/NAD(P)-binding domain"/>
    <property type="match status" value="1"/>
</dbReference>